<comment type="catalytic activity">
    <reaction>
        <text>Preferential cleavage: Arg-|-Xaa, Lys-|-Xaa.</text>
        <dbReference type="EC" id="3.4.21.4"/>
    </reaction>
</comment>
<comment type="cofactor">
    <cofactor evidence="1">
        <name>Ca(2+)</name>
        <dbReference type="ChEBI" id="CHEBI:29108"/>
    </cofactor>
    <text evidence="1">Binds 1 Ca(2+) ion per subunit.</text>
</comment>
<comment type="subcellular location">
    <subcellularLocation>
        <location>Secreted</location>
        <location>Extracellular space</location>
    </subcellularLocation>
</comment>
<comment type="PTM">
    <text>Not sulfated on tyrosine residue(s).</text>
</comment>
<comment type="similarity">
    <text evidence="3">Belongs to the peptidase S1 family.</text>
</comment>
<protein>
    <recommendedName>
        <fullName>Anionic trypsin</fullName>
        <ecNumber>3.4.21.4</ecNumber>
    </recommendedName>
</protein>
<organism>
    <name type="scientific">Bos taurus</name>
    <name type="common">Bovine</name>
    <dbReference type="NCBI Taxonomy" id="9913"/>
    <lineage>
        <taxon>Eukaryota</taxon>
        <taxon>Metazoa</taxon>
        <taxon>Chordata</taxon>
        <taxon>Craniata</taxon>
        <taxon>Vertebrata</taxon>
        <taxon>Euteleostomi</taxon>
        <taxon>Mammalia</taxon>
        <taxon>Eutheria</taxon>
        <taxon>Laurasiatheria</taxon>
        <taxon>Artiodactyla</taxon>
        <taxon>Ruminantia</taxon>
        <taxon>Pecora</taxon>
        <taxon>Bovidae</taxon>
        <taxon>Bovinae</taxon>
        <taxon>Bos</taxon>
    </lineage>
</organism>
<name>TRY2_BOVIN</name>
<keyword id="KW-0106">Calcium</keyword>
<keyword id="KW-0222">Digestion</keyword>
<keyword id="KW-1015">Disulfide bond</keyword>
<keyword id="KW-0378">Hydrolase</keyword>
<keyword id="KW-0479">Metal-binding</keyword>
<keyword id="KW-0645">Protease</keyword>
<keyword id="KW-1185">Reference proteome</keyword>
<keyword id="KW-0964">Secreted</keyword>
<keyword id="KW-0720">Serine protease</keyword>
<keyword id="KW-0732">Signal</keyword>
<keyword id="KW-0865">Zymogen</keyword>
<reference key="1">
    <citation type="journal article" date="1990" name="Eur. J. Biochem.">
        <title>Isolation and nucleotide sequence of cDNA clone for bovine pancreatic anionic trypsinogen. Structural identity within the trypsin family.</title>
        <authorList>
            <person name="le Huerou I."/>
            <person name="Wicker C."/>
            <person name="Guilloteau P."/>
            <person name="Toullec R."/>
            <person name="Puigserver A."/>
        </authorList>
    </citation>
    <scope>NUCLEOTIDE SEQUENCE [MRNA]</scope>
    <source>
        <strain>Holstein-Friesian</strain>
        <tissue>Pancreas</tissue>
    </source>
</reference>
<reference key="2">
    <citation type="journal article" date="2006" name="FEBS J.">
        <title>Human cationic trypsinogen is sulfated on Tyr154.</title>
        <authorList>
            <person name="Sahin-Toth M."/>
            <person name="Kukor Z."/>
            <person name="Nemoda Z."/>
        </authorList>
    </citation>
    <scope>ABSENCE OF SULFATED TYROSINE</scope>
</reference>
<accession>Q29463</accession>
<sequence length="247" mass="26290">MHPLLILAFVGAAVAFPSDDDDKIVGGYTCAENSVPYQVSLNAGYHFCGGSLINDQWVVSAAHCYQYHIQVRLGEYNIDVLEGGEQFIDASKIIRHPKYSSWTLDNDILLIKLSTPAVINARVSTLLLPSACASAGTECLISGWGNTLSSGVNYPDLLQCLVAPLLSHADCEASYPGQITNNMICAGFLEGGKDSCQGDSGGPVACNGQLQGIVSWGYGCAQKGKPGVYTKVCNYVDWIQETIAANS</sequence>
<feature type="signal peptide" evidence="2">
    <location>
        <begin position="1"/>
        <end position="15"/>
    </location>
</feature>
<feature type="propeptide" id="PRO_0000028189" description="Activation peptide">
    <location>
        <begin position="16"/>
        <end position="23"/>
    </location>
</feature>
<feature type="chain" id="PRO_0000028190" description="Anionic trypsin">
    <location>
        <begin position="24"/>
        <end position="247"/>
    </location>
</feature>
<feature type="domain" description="Peptidase S1" evidence="3">
    <location>
        <begin position="24"/>
        <end position="244"/>
    </location>
</feature>
<feature type="active site" description="Charge relay system">
    <location>
        <position position="63"/>
    </location>
</feature>
<feature type="active site" description="Charge relay system">
    <location>
        <position position="107"/>
    </location>
</feature>
<feature type="active site" description="Charge relay system">
    <location>
        <position position="200"/>
    </location>
</feature>
<feature type="binding site" evidence="1">
    <location>
        <position position="75"/>
    </location>
    <ligand>
        <name>Ca(2+)</name>
        <dbReference type="ChEBI" id="CHEBI:29108"/>
    </ligand>
</feature>
<feature type="binding site" evidence="1">
    <location>
        <position position="77"/>
    </location>
    <ligand>
        <name>Ca(2+)</name>
        <dbReference type="ChEBI" id="CHEBI:29108"/>
    </ligand>
</feature>
<feature type="binding site" evidence="1">
    <location>
        <position position="80"/>
    </location>
    <ligand>
        <name>Ca(2+)</name>
        <dbReference type="ChEBI" id="CHEBI:29108"/>
    </ligand>
</feature>
<feature type="binding site" evidence="1">
    <location>
        <position position="85"/>
    </location>
    <ligand>
        <name>Ca(2+)</name>
        <dbReference type="ChEBI" id="CHEBI:29108"/>
    </ligand>
</feature>
<feature type="site" description="Required for specificity">
    <location>
        <position position="194"/>
    </location>
</feature>
<feature type="disulfide bond" evidence="3">
    <location>
        <begin position="30"/>
        <end position="160"/>
    </location>
</feature>
<feature type="disulfide bond" evidence="3">
    <location>
        <begin position="48"/>
        <end position="64"/>
    </location>
</feature>
<feature type="disulfide bond" evidence="3">
    <location>
        <begin position="132"/>
        <end position="233"/>
    </location>
</feature>
<feature type="disulfide bond" evidence="3">
    <location>
        <begin position="139"/>
        <end position="206"/>
    </location>
</feature>
<feature type="disulfide bond" evidence="3">
    <location>
        <begin position="171"/>
        <end position="185"/>
    </location>
</feature>
<feature type="disulfide bond" evidence="3">
    <location>
        <begin position="196"/>
        <end position="220"/>
    </location>
</feature>
<proteinExistence type="evidence at transcript level"/>
<evidence type="ECO:0000250" key="1"/>
<evidence type="ECO:0000255" key="2"/>
<evidence type="ECO:0000255" key="3">
    <source>
        <dbReference type="PROSITE-ProRule" id="PRU00274"/>
    </source>
</evidence>
<dbReference type="EC" id="3.4.21.4"/>
<dbReference type="EMBL" id="X54703">
    <property type="protein sequence ID" value="CAA38513.1"/>
    <property type="molecule type" value="mRNA"/>
</dbReference>
<dbReference type="PIR" id="S13813">
    <property type="entry name" value="S13813"/>
</dbReference>
<dbReference type="SMR" id="Q29463"/>
<dbReference type="FunCoup" id="Q29463">
    <property type="interactions" value="41"/>
</dbReference>
<dbReference type="STRING" id="9913.ENSBTAP00000028731"/>
<dbReference type="BindingDB" id="Q29463"/>
<dbReference type="ChEMBL" id="CHEMBL4472"/>
<dbReference type="MEROPS" id="S01.120"/>
<dbReference type="PaxDb" id="9913-ENSBTAP00000028731"/>
<dbReference type="eggNOG" id="KOG3627">
    <property type="taxonomic scope" value="Eukaryota"/>
</dbReference>
<dbReference type="InParanoid" id="Q29463"/>
<dbReference type="Proteomes" id="UP000009136">
    <property type="component" value="Unplaced"/>
</dbReference>
<dbReference type="GO" id="GO:0005576">
    <property type="term" value="C:extracellular region"/>
    <property type="evidence" value="ECO:0000250"/>
    <property type="project" value="UniProtKB"/>
</dbReference>
<dbReference type="GO" id="GO:0005615">
    <property type="term" value="C:extracellular space"/>
    <property type="evidence" value="ECO:0000250"/>
    <property type="project" value="UniProtKB"/>
</dbReference>
<dbReference type="GO" id="GO:0005509">
    <property type="term" value="F:calcium ion binding"/>
    <property type="evidence" value="ECO:0000250"/>
    <property type="project" value="UniProtKB"/>
</dbReference>
<dbReference type="GO" id="GO:0004252">
    <property type="term" value="F:serine-type endopeptidase activity"/>
    <property type="evidence" value="ECO:0000250"/>
    <property type="project" value="UniProtKB"/>
</dbReference>
<dbReference type="GO" id="GO:0030574">
    <property type="term" value="P:collagen catabolic process"/>
    <property type="evidence" value="ECO:0000250"/>
    <property type="project" value="UniProtKB"/>
</dbReference>
<dbReference type="GO" id="GO:0007586">
    <property type="term" value="P:digestion"/>
    <property type="evidence" value="ECO:0007669"/>
    <property type="project" value="UniProtKB-KW"/>
</dbReference>
<dbReference type="GO" id="GO:0006508">
    <property type="term" value="P:proteolysis"/>
    <property type="evidence" value="ECO:0000250"/>
    <property type="project" value="UniProtKB"/>
</dbReference>
<dbReference type="CDD" id="cd00190">
    <property type="entry name" value="Tryp_SPc"/>
    <property type="match status" value="1"/>
</dbReference>
<dbReference type="FunFam" id="2.40.10.10:FF:000019">
    <property type="entry name" value="Anionic trypsin"/>
    <property type="match status" value="1"/>
</dbReference>
<dbReference type="Gene3D" id="2.40.10.10">
    <property type="entry name" value="Trypsin-like serine proteases"/>
    <property type="match status" value="2"/>
</dbReference>
<dbReference type="InterPro" id="IPR009003">
    <property type="entry name" value="Peptidase_S1_PA"/>
</dbReference>
<dbReference type="InterPro" id="IPR043504">
    <property type="entry name" value="Peptidase_S1_PA_chymotrypsin"/>
</dbReference>
<dbReference type="InterPro" id="IPR001314">
    <property type="entry name" value="Peptidase_S1A"/>
</dbReference>
<dbReference type="InterPro" id="IPR050127">
    <property type="entry name" value="Serine_Proteases_S1"/>
</dbReference>
<dbReference type="InterPro" id="IPR001254">
    <property type="entry name" value="Trypsin_dom"/>
</dbReference>
<dbReference type="InterPro" id="IPR018114">
    <property type="entry name" value="TRYPSIN_HIS"/>
</dbReference>
<dbReference type="InterPro" id="IPR033116">
    <property type="entry name" value="TRYPSIN_SER"/>
</dbReference>
<dbReference type="PANTHER" id="PTHR24264:SF57">
    <property type="entry name" value="TRYPSIN-2"/>
    <property type="match status" value="1"/>
</dbReference>
<dbReference type="PANTHER" id="PTHR24264">
    <property type="entry name" value="TRYPSIN-RELATED"/>
    <property type="match status" value="1"/>
</dbReference>
<dbReference type="Pfam" id="PF00089">
    <property type="entry name" value="Trypsin"/>
    <property type="match status" value="1"/>
</dbReference>
<dbReference type="PRINTS" id="PR00722">
    <property type="entry name" value="CHYMOTRYPSIN"/>
</dbReference>
<dbReference type="SMART" id="SM00020">
    <property type="entry name" value="Tryp_SPc"/>
    <property type="match status" value="1"/>
</dbReference>
<dbReference type="SUPFAM" id="SSF50494">
    <property type="entry name" value="Trypsin-like serine proteases"/>
    <property type="match status" value="1"/>
</dbReference>
<dbReference type="PROSITE" id="PS50240">
    <property type="entry name" value="TRYPSIN_DOM"/>
    <property type="match status" value="1"/>
</dbReference>
<dbReference type="PROSITE" id="PS00134">
    <property type="entry name" value="TRYPSIN_HIS"/>
    <property type="match status" value="1"/>
</dbReference>
<dbReference type="PROSITE" id="PS00135">
    <property type="entry name" value="TRYPSIN_SER"/>
    <property type="match status" value="1"/>
</dbReference>